<accession>Q89AI9</accession>
<gene>
    <name type="ordered locus">bbp_296</name>
</gene>
<reference key="1">
    <citation type="journal article" date="2003" name="Proc. Natl. Acad. Sci. U.S.A.">
        <title>Reductive genome evolution in Buchnera aphidicola.</title>
        <authorList>
            <person name="van Ham R.C.H.J."/>
            <person name="Kamerbeek J."/>
            <person name="Palacios C."/>
            <person name="Rausell C."/>
            <person name="Abascal F."/>
            <person name="Bastolla U."/>
            <person name="Fernandez J.M."/>
            <person name="Jimenez L."/>
            <person name="Postigo M."/>
            <person name="Silva F.J."/>
            <person name="Tamames J."/>
            <person name="Viguera E."/>
            <person name="Latorre A."/>
            <person name="Valencia A."/>
            <person name="Moran F."/>
            <person name="Moya A."/>
        </authorList>
    </citation>
    <scope>NUCLEOTIDE SEQUENCE [LARGE SCALE GENOMIC DNA]</scope>
    <source>
        <strain>Bp</strain>
    </source>
</reference>
<evidence type="ECO:0000255" key="1"/>
<evidence type="ECO:0000305" key="2"/>
<name>Y296_BUCBP</name>
<feature type="chain" id="PRO_0000026828" description="Uncharacterized metalloprotease bbp_296">
    <location>
        <begin position="1"/>
        <end position="376"/>
    </location>
</feature>
<feature type="transmembrane region" description="Helical" evidence="1">
    <location>
        <begin position="24"/>
        <end position="44"/>
    </location>
</feature>
<feature type="binding site" evidence="1">
    <location>
        <position position="251"/>
    </location>
    <ligand>
        <name>Zn(2+)</name>
        <dbReference type="ChEBI" id="CHEBI:29105"/>
    </ligand>
</feature>
<protein>
    <recommendedName>
        <fullName>Uncharacterized metalloprotease bbp_296</fullName>
        <ecNumber>3.4.24.-</ecNumber>
    </recommendedName>
</protein>
<organism>
    <name type="scientific">Buchnera aphidicola subsp. Baizongia pistaciae (strain Bp)</name>
    <dbReference type="NCBI Taxonomy" id="224915"/>
    <lineage>
        <taxon>Bacteria</taxon>
        <taxon>Pseudomonadati</taxon>
        <taxon>Pseudomonadota</taxon>
        <taxon>Gammaproteobacteria</taxon>
        <taxon>Enterobacterales</taxon>
        <taxon>Erwiniaceae</taxon>
        <taxon>Buchnera</taxon>
    </lineage>
</organism>
<keyword id="KW-1003">Cell membrane</keyword>
<keyword id="KW-0378">Hydrolase</keyword>
<keyword id="KW-0472">Membrane</keyword>
<keyword id="KW-0479">Metal-binding</keyword>
<keyword id="KW-0482">Metalloprotease</keyword>
<keyword id="KW-0645">Protease</keyword>
<keyword id="KW-1185">Reference proteome</keyword>
<keyword id="KW-0812">Transmembrane</keyword>
<keyword id="KW-1133">Transmembrane helix</keyword>
<keyword id="KW-0862">Zinc</keyword>
<sequence>MTKCNIFNMIFLKFSNAFIKKIKYLSIISIISVFLLNSSIVYSCSKIILIFDNNFKENNKNILNKLVLPIKNIILKGTSNLEFNDYLLKLSNFYGSPIHKCIYNFPYKKLQNNNLNNLKYIIFKSKIDNNFIKNMQYLNVSNDNIDNVVRCIKLELKIHQLKQDHKCNILIQNNSFLKHNIVQKNIILSFEIPYNTKNIYGFFTKKNKFFDVHGISSAPIFLKFPFLKKYRISSKFNPNRFNPITKKNSPHQGIDFAMPIGTPILSIGDGVILNAKFSIQAGNYITIQHNCSYITKYMHLKKILVKIGDKVKMRDKIGLSGNTGYSTGPHLHYEVWLHKKVINPKNLKTRECLIKKNLKEHINFSNIIITQFEIFK</sequence>
<proteinExistence type="inferred from homology"/>
<dbReference type="EC" id="3.4.24.-"/>
<dbReference type="EMBL" id="AE016826">
    <property type="protein sequence ID" value="AAO27021.1"/>
    <property type="molecule type" value="Genomic_DNA"/>
</dbReference>
<dbReference type="SMR" id="Q89AI9"/>
<dbReference type="STRING" id="224915.bbp_296"/>
<dbReference type="MEROPS" id="M23.011"/>
<dbReference type="KEGG" id="bab:bbp_296"/>
<dbReference type="eggNOG" id="COG0739">
    <property type="taxonomic scope" value="Bacteria"/>
</dbReference>
<dbReference type="HOGENOM" id="CLU_735034_0_0_6"/>
<dbReference type="Proteomes" id="UP000000601">
    <property type="component" value="Chromosome"/>
</dbReference>
<dbReference type="GO" id="GO:0005886">
    <property type="term" value="C:plasma membrane"/>
    <property type="evidence" value="ECO:0007669"/>
    <property type="project" value="UniProtKB-SubCell"/>
</dbReference>
<dbReference type="GO" id="GO:0046872">
    <property type="term" value="F:metal ion binding"/>
    <property type="evidence" value="ECO:0007669"/>
    <property type="project" value="UniProtKB-KW"/>
</dbReference>
<dbReference type="GO" id="GO:0004222">
    <property type="term" value="F:metalloendopeptidase activity"/>
    <property type="evidence" value="ECO:0007669"/>
    <property type="project" value="TreeGrafter"/>
</dbReference>
<dbReference type="GO" id="GO:0006508">
    <property type="term" value="P:proteolysis"/>
    <property type="evidence" value="ECO:0007669"/>
    <property type="project" value="UniProtKB-KW"/>
</dbReference>
<dbReference type="CDD" id="cd12797">
    <property type="entry name" value="M23_peptidase"/>
    <property type="match status" value="1"/>
</dbReference>
<dbReference type="FunFam" id="2.70.70.10:FF:000002">
    <property type="entry name" value="Murein DD-endopeptidase MepM"/>
    <property type="match status" value="1"/>
</dbReference>
<dbReference type="Gene3D" id="3.10.450.350">
    <property type="match status" value="1"/>
</dbReference>
<dbReference type="Gene3D" id="2.70.70.10">
    <property type="entry name" value="Glucose Permease (Domain IIA)"/>
    <property type="match status" value="1"/>
</dbReference>
<dbReference type="InterPro" id="IPR050570">
    <property type="entry name" value="Cell_wall_metabolism_enzyme"/>
</dbReference>
<dbReference type="InterPro" id="IPR045834">
    <property type="entry name" value="Csd3_N2"/>
</dbReference>
<dbReference type="InterPro" id="IPR011055">
    <property type="entry name" value="Dup_hybrid_motif"/>
</dbReference>
<dbReference type="InterPro" id="IPR016047">
    <property type="entry name" value="Peptidase_M23"/>
</dbReference>
<dbReference type="PANTHER" id="PTHR21666:SF292">
    <property type="entry name" value="MUREIN DD-ENDOPEPTIDASE MEPM"/>
    <property type="match status" value="1"/>
</dbReference>
<dbReference type="PANTHER" id="PTHR21666">
    <property type="entry name" value="PEPTIDASE-RELATED"/>
    <property type="match status" value="1"/>
</dbReference>
<dbReference type="Pfam" id="PF19425">
    <property type="entry name" value="Csd3_N2"/>
    <property type="match status" value="1"/>
</dbReference>
<dbReference type="Pfam" id="PF01551">
    <property type="entry name" value="Peptidase_M23"/>
    <property type="match status" value="1"/>
</dbReference>
<dbReference type="SUPFAM" id="SSF51261">
    <property type="entry name" value="Duplicated hybrid motif"/>
    <property type="match status" value="1"/>
</dbReference>
<comment type="cofactor">
    <cofactor evidence="2">
        <name>Zn(2+)</name>
        <dbReference type="ChEBI" id="CHEBI:29105"/>
    </cofactor>
</comment>
<comment type="subcellular location">
    <subcellularLocation>
        <location evidence="2">Cell membrane</location>
        <topology evidence="2">Single-pass membrane protein</topology>
    </subcellularLocation>
</comment>
<comment type="similarity">
    <text evidence="2">Belongs to the peptidase M23B family.</text>
</comment>